<organism>
    <name type="scientific">Xanthomonas oryzae pv. oryzae (strain KACC10331 / KXO85)</name>
    <dbReference type="NCBI Taxonomy" id="291331"/>
    <lineage>
        <taxon>Bacteria</taxon>
        <taxon>Pseudomonadati</taxon>
        <taxon>Pseudomonadota</taxon>
        <taxon>Gammaproteobacteria</taxon>
        <taxon>Lysobacterales</taxon>
        <taxon>Lysobacteraceae</taxon>
        <taxon>Xanthomonas</taxon>
    </lineage>
</organism>
<name>NUOB_XANOR</name>
<sequence>MGVIQTLDRLMTNPMPEGRVEDILRPEGENPLLEKGYVTTSVDALLNWARTGSMWPMTFGLACCAVEMMHAGASRLDLDRYGVVFRPSPRQSDVMIVAGTLVNKMAPALRKVYDQMPDPKWVISMGSCANGGGYYHYSYSVVRGCDRIVPVDIYVPGCPPTAEALVYGILQLQKKIWRTQTIAR</sequence>
<proteinExistence type="inferred from homology"/>
<dbReference type="EC" id="7.1.1.-" evidence="1"/>
<dbReference type="EMBL" id="AE013598">
    <property type="protein sequence ID" value="AAW76489.1"/>
    <property type="status" value="ALT_INIT"/>
    <property type="molecule type" value="Genomic_DNA"/>
</dbReference>
<dbReference type="SMR" id="Q5GXT2"/>
<dbReference type="STRING" id="291331.XOO3235"/>
<dbReference type="KEGG" id="xoo:XOO3235"/>
<dbReference type="HOGENOM" id="CLU_055737_7_3_6"/>
<dbReference type="Proteomes" id="UP000006735">
    <property type="component" value="Chromosome"/>
</dbReference>
<dbReference type="GO" id="GO:0005886">
    <property type="term" value="C:plasma membrane"/>
    <property type="evidence" value="ECO:0007669"/>
    <property type="project" value="UniProtKB-SubCell"/>
</dbReference>
<dbReference type="GO" id="GO:0045271">
    <property type="term" value="C:respiratory chain complex I"/>
    <property type="evidence" value="ECO:0007669"/>
    <property type="project" value="TreeGrafter"/>
</dbReference>
<dbReference type="GO" id="GO:0051539">
    <property type="term" value="F:4 iron, 4 sulfur cluster binding"/>
    <property type="evidence" value="ECO:0007669"/>
    <property type="project" value="UniProtKB-KW"/>
</dbReference>
<dbReference type="GO" id="GO:0005506">
    <property type="term" value="F:iron ion binding"/>
    <property type="evidence" value="ECO:0007669"/>
    <property type="project" value="UniProtKB-UniRule"/>
</dbReference>
<dbReference type="GO" id="GO:0008137">
    <property type="term" value="F:NADH dehydrogenase (ubiquinone) activity"/>
    <property type="evidence" value="ECO:0007669"/>
    <property type="project" value="InterPro"/>
</dbReference>
<dbReference type="GO" id="GO:0050136">
    <property type="term" value="F:NADH:ubiquinone reductase (non-electrogenic) activity"/>
    <property type="evidence" value="ECO:0007669"/>
    <property type="project" value="UniProtKB-UniRule"/>
</dbReference>
<dbReference type="GO" id="GO:0048038">
    <property type="term" value="F:quinone binding"/>
    <property type="evidence" value="ECO:0007669"/>
    <property type="project" value="UniProtKB-KW"/>
</dbReference>
<dbReference type="GO" id="GO:0009060">
    <property type="term" value="P:aerobic respiration"/>
    <property type="evidence" value="ECO:0007669"/>
    <property type="project" value="TreeGrafter"/>
</dbReference>
<dbReference type="GO" id="GO:0015990">
    <property type="term" value="P:electron transport coupled proton transport"/>
    <property type="evidence" value="ECO:0007669"/>
    <property type="project" value="TreeGrafter"/>
</dbReference>
<dbReference type="FunFam" id="3.40.50.12280:FF:000001">
    <property type="entry name" value="NADH-quinone oxidoreductase subunit B 2"/>
    <property type="match status" value="1"/>
</dbReference>
<dbReference type="Gene3D" id="3.40.50.12280">
    <property type="match status" value="1"/>
</dbReference>
<dbReference type="HAMAP" id="MF_01356">
    <property type="entry name" value="NDH1_NuoB"/>
    <property type="match status" value="1"/>
</dbReference>
<dbReference type="InterPro" id="IPR006137">
    <property type="entry name" value="NADH_UbQ_OxRdtase-like_20kDa"/>
</dbReference>
<dbReference type="InterPro" id="IPR006138">
    <property type="entry name" value="NADH_UQ_OxRdtase_20Kd_su"/>
</dbReference>
<dbReference type="NCBIfam" id="TIGR01957">
    <property type="entry name" value="nuoB_fam"/>
    <property type="match status" value="1"/>
</dbReference>
<dbReference type="NCBIfam" id="NF005012">
    <property type="entry name" value="PRK06411.1"/>
    <property type="match status" value="1"/>
</dbReference>
<dbReference type="PANTHER" id="PTHR11995">
    <property type="entry name" value="NADH DEHYDROGENASE"/>
    <property type="match status" value="1"/>
</dbReference>
<dbReference type="PANTHER" id="PTHR11995:SF14">
    <property type="entry name" value="NADH DEHYDROGENASE [UBIQUINONE] IRON-SULFUR PROTEIN 7, MITOCHONDRIAL"/>
    <property type="match status" value="1"/>
</dbReference>
<dbReference type="Pfam" id="PF01058">
    <property type="entry name" value="Oxidored_q6"/>
    <property type="match status" value="1"/>
</dbReference>
<dbReference type="SUPFAM" id="SSF56770">
    <property type="entry name" value="HydA/Nqo6-like"/>
    <property type="match status" value="1"/>
</dbReference>
<dbReference type="PROSITE" id="PS01150">
    <property type="entry name" value="COMPLEX1_20K"/>
    <property type="match status" value="1"/>
</dbReference>
<comment type="function">
    <text evidence="1">NDH-1 shuttles electrons from NADH, via FMN and iron-sulfur (Fe-S) centers, to quinones in the respiratory chain. The immediate electron acceptor for the enzyme in this species is believed to be ubiquinone. Couples the redox reaction to proton translocation (for every two electrons transferred, four hydrogen ions are translocated across the cytoplasmic membrane), and thus conserves the redox energy in a proton gradient.</text>
</comment>
<comment type="catalytic activity">
    <reaction evidence="1">
        <text>a quinone + NADH + 5 H(+)(in) = a quinol + NAD(+) + 4 H(+)(out)</text>
        <dbReference type="Rhea" id="RHEA:57888"/>
        <dbReference type="ChEBI" id="CHEBI:15378"/>
        <dbReference type="ChEBI" id="CHEBI:24646"/>
        <dbReference type="ChEBI" id="CHEBI:57540"/>
        <dbReference type="ChEBI" id="CHEBI:57945"/>
        <dbReference type="ChEBI" id="CHEBI:132124"/>
    </reaction>
</comment>
<comment type="cofactor">
    <cofactor evidence="1">
        <name>[4Fe-4S] cluster</name>
        <dbReference type="ChEBI" id="CHEBI:49883"/>
    </cofactor>
    <text evidence="1">Binds 1 [4Fe-4S] cluster.</text>
</comment>
<comment type="subunit">
    <text evidence="1">NDH-1 is composed of 14 different subunits. Subunits NuoB, C, D, E, F, and G constitute the peripheral sector of the complex.</text>
</comment>
<comment type="subcellular location">
    <subcellularLocation>
        <location evidence="1">Cell inner membrane</location>
        <topology evidence="1">Peripheral membrane protein</topology>
        <orientation evidence="1">Cytoplasmic side</orientation>
    </subcellularLocation>
</comment>
<comment type="similarity">
    <text evidence="1">Belongs to the complex I 20 kDa subunit family.</text>
</comment>
<comment type="sequence caution" evidence="2">
    <conflict type="erroneous initiation">
        <sequence resource="EMBL-CDS" id="AAW76489"/>
    </conflict>
</comment>
<feature type="chain" id="PRO_0000376404" description="NADH-quinone oxidoreductase subunit B">
    <location>
        <begin position="1"/>
        <end position="184"/>
    </location>
</feature>
<feature type="binding site" evidence="1">
    <location>
        <position position="63"/>
    </location>
    <ligand>
        <name>[4Fe-4S] cluster</name>
        <dbReference type="ChEBI" id="CHEBI:49883"/>
    </ligand>
</feature>
<feature type="binding site" evidence="1">
    <location>
        <position position="64"/>
    </location>
    <ligand>
        <name>[4Fe-4S] cluster</name>
        <dbReference type="ChEBI" id="CHEBI:49883"/>
    </ligand>
</feature>
<feature type="binding site" evidence="1">
    <location>
        <position position="128"/>
    </location>
    <ligand>
        <name>[4Fe-4S] cluster</name>
        <dbReference type="ChEBI" id="CHEBI:49883"/>
    </ligand>
</feature>
<feature type="binding site" evidence="1">
    <location>
        <position position="158"/>
    </location>
    <ligand>
        <name>[4Fe-4S] cluster</name>
        <dbReference type="ChEBI" id="CHEBI:49883"/>
    </ligand>
</feature>
<reference key="1">
    <citation type="journal article" date="2005" name="Nucleic Acids Res.">
        <title>The genome sequence of Xanthomonas oryzae pathovar oryzae KACC10331, the bacterial blight pathogen of rice.</title>
        <authorList>
            <person name="Lee B.-M."/>
            <person name="Park Y.-J."/>
            <person name="Park D.-S."/>
            <person name="Kang H.-W."/>
            <person name="Kim J.-G."/>
            <person name="Song E.-S."/>
            <person name="Park I.-C."/>
            <person name="Yoon U.-H."/>
            <person name="Hahn J.-H."/>
            <person name="Koo B.-S."/>
            <person name="Lee G.-B."/>
            <person name="Kim H."/>
            <person name="Park H.-S."/>
            <person name="Yoon K.-O."/>
            <person name="Kim J.-H."/>
            <person name="Jung C.-H."/>
            <person name="Koh N.-H."/>
            <person name="Seo J.-S."/>
            <person name="Go S.-J."/>
        </authorList>
    </citation>
    <scope>NUCLEOTIDE SEQUENCE [LARGE SCALE GENOMIC DNA]</scope>
    <source>
        <strain>KACC10331 / KXO85</strain>
    </source>
</reference>
<keyword id="KW-0004">4Fe-4S</keyword>
<keyword id="KW-0997">Cell inner membrane</keyword>
<keyword id="KW-1003">Cell membrane</keyword>
<keyword id="KW-0408">Iron</keyword>
<keyword id="KW-0411">Iron-sulfur</keyword>
<keyword id="KW-0472">Membrane</keyword>
<keyword id="KW-0479">Metal-binding</keyword>
<keyword id="KW-0520">NAD</keyword>
<keyword id="KW-0874">Quinone</keyword>
<keyword id="KW-1185">Reference proteome</keyword>
<keyword id="KW-1278">Translocase</keyword>
<keyword id="KW-0813">Transport</keyword>
<keyword id="KW-0830">Ubiquinone</keyword>
<accession>Q5GXT2</accession>
<evidence type="ECO:0000255" key="1">
    <source>
        <dbReference type="HAMAP-Rule" id="MF_01356"/>
    </source>
</evidence>
<evidence type="ECO:0000305" key="2"/>
<gene>
    <name evidence="1" type="primary">nuoB</name>
    <name type="ordered locus">XOO3235</name>
</gene>
<protein>
    <recommendedName>
        <fullName evidence="1">NADH-quinone oxidoreductase subunit B</fullName>
        <ecNumber evidence="1">7.1.1.-</ecNumber>
    </recommendedName>
    <alternativeName>
        <fullName evidence="1">NADH dehydrogenase I subunit B</fullName>
    </alternativeName>
    <alternativeName>
        <fullName evidence="1">NDH-1 subunit B</fullName>
    </alternativeName>
</protein>